<reference key="1">
    <citation type="journal article" date="2008" name="PLoS Genet.">
        <title>Genomic islands in the pathogenic filamentous fungus Aspergillus fumigatus.</title>
        <authorList>
            <person name="Fedorova N.D."/>
            <person name="Khaldi N."/>
            <person name="Joardar V.S."/>
            <person name="Maiti R."/>
            <person name="Amedeo P."/>
            <person name="Anderson M.J."/>
            <person name="Crabtree J."/>
            <person name="Silva J.C."/>
            <person name="Badger J.H."/>
            <person name="Albarraq A."/>
            <person name="Angiuoli S."/>
            <person name="Bussey H."/>
            <person name="Bowyer P."/>
            <person name="Cotty P.J."/>
            <person name="Dyer P.S."/>
            <person name="Egan A."/>
            <person name="Galens K."/>
            <person name="Fraser-Liggett C.M."/>
            <person name="Haas B.J."/>
            <person name="Inman J.M."/>
            <person name="Kent R."/>
            <person name="Lemieux S."/>
            <person name="Malavazi I."/>
            <person name="Orvis J."/>
            <person name="Roemer T."/>
            <person name="Ronning C.M."/>
            <person name="Sundaram J.P."/>
            <person name="Sutton G."/>
            <person name="Turner G."/>
            <person name="Venter J.C."/>
            <person name="White O.R."/>
            <person name="Whitty B.R."/>
            <person name="Youngman P."/>
            <person name="Wolfe K.H."/>
            <person name="Goldman G.H."/>
            <person name="Wortman J.R."/>
            <person name="Jiang B."/>
            <person name="Denning D.W."/>
            <person name="Nierman W.C."/>
        </authorList>
    </citation>
    <scope>NUCLEOTIDE SEQUENCE [LARGE SCALE GENOMIC DNA]</scope>
    <source>
        <strain>ATCC 1020 / DSM 3700 / CBS 544.65 / FGSC A1164 / JCM 1740 / NRRL 181 / WB 181</strain>
    </source>
</reference>
<protein>
    <recommendedName>
        <fullName>Transcription activator of gluconeogenesis acuK</fullName>
    </recommendedName>
</protein>
<organism>
    <name type="scientific">Neosartorya fischeri (strain ATCC 1020 / DSM 3700 / CBS 544.65 / FGSC A1164 / JCM 1740 / NRRL 181 / WB 181)</name>
    <name type="common">Aspergillus fischerianus</name>
    <dbReference type="NCBI Taxonomy" id="331117"/>
    <lineage>
        <taxon>Eukaryota</taxon>
        <taxon>Fungi</taxon>
        <taxon>Dikarya</taxon>
        <taxon>Ascomycota</taxon>
        <taxon>Pezizomycotina</taxon>
        <taxon>Eurotiomycetes</taxon>
        <taxon>Eurotiomycetidae</taxon>
        <taxon>Eurotiales</taxon>
        <taxon>Aspergillaceae</taxon>
        <taxon>Aspergillus</taxon>
        <taxon>Aspergillus subgen. Fumigati</taxon>
    </lineage>
</organism>
<sequence length="683" mass="74236">MKTEDNGSAPALAGDHGGVDQDTPDAGDRTEQAKHKTNGTTEKAPKSSNAKDPSRPRRKKARRACFACQRAHLTCGDERPCQRCIKRGLQDACHDGVRKKAKYLHDAPDGALMPGVGGNFYNNAMRNNLPLSRNGATTVNTTSQQNSGSSYYPTPQSNSYNVYQDTPLTQNSFPSQSPVSPTFNMKTTPTARSNSLSSSVNQQPPNTTVSGATQSQNPFAGPFFDPSDPALFNFDLSSMNFENRYGALEFGMLGHMATGAGDSPTDSATQRGSMGRSGSTQYSTTPITGAPGFGESPGNQQPFMFGNDPLLNEWPNSQAPNQGHLNVSGVYPQGGMMHMAKSDAPHAFAIESGPASFSSPSATTSPHINSGYDESSLSNTVVNKSNGLTANGQRPAITTPSLKHQSLQFGVKRRQRNPSTVYESVKEPYAYTNRFHNLTAFIQRRFSPQKTLQIAKALASIRPSFIATTKTLNRDDLIFMEKCFQRTLWEYEDFINACGTPTIVCRRTGEIAAVGKEFSILTGWKKDVLLGKEPNLNVNTGGSSAPGSGTTSRGSFTPRSSTLENATPGRPQPVFLAELLDDDSVVEFYEDFARLAFGDSRGSVMTTCKLLKYKTKEDMELAQSDDNQRWNNHLRKGGIAGEAGMNQLGFKDGKVECAYCWTVKRDVFDIPMLIVMNVSCQCF</sequence>
<evidence type="ECO:0000250" key="1"/>
<evidence type="ECO:0000255" key="2">
    <source>
        <dbReference type="PROSITE-ProRule" id="PRU00227"/>
    </source>
</evidence>
<evidence type="ECO:0000256" key="3">
    <source>
        <dbReference type="SAM" id="MobiDB-lite"/>
    </source>
</evidence>
<evidence type="ECO:0000305" key="4"/>
<accession>A1DG01</accession>
<dbReference type="EMBL" id="DS027696">
    <property type="protein sequence ID" value="EAW18308.1"/>
    <property type="molecule type" value="Genomic_DNA"/>
</dbReference>
<dbReference type="RefSeq" id="XP_001260205.1">
    <property type="nucleotide sequence ID" value="XM_001260204.1"/>
</dbReference>
<dbReference type="SMR" id="A1DG01"/>
<dbReference type="STRING" id="331117.A1DG01"/>
<dbReference type="EnsemblFungi" id="EAW18308">
    <property type="protein sequence ID" value="EAW18308"/>
    <property type="gene ID" value="NFIA_082550"/>
</dbReference>
<dbReference type="KEGG" id="nfi:NFIA_082550"/>
<dbReference type="VEuPathDB" id="FungiDB:NFIA_082550"/>
<dbReference type="eggNOG" id="ENOG502R1M5">
    <property type="taxonomic scope" value="Eukaryota"/>
</dbReference>
<dbReference type="HOGENOM" id="CLU_010748_1_0_1"/>
<dbReference type="OMA" id="VMTTCKL"/>
<dbReference type="OrthoDB" id="2538135at2759"/>
<dbReference type="Proteomes" id="UP000006702">
    <property type="component" value="Unassembled WGS sequence"/>
</dbReference>
<dbReference type="GO" id="GO:0005634">
    <property type="term" value="C:nucleus"/>
    <property type="evidence" value="ECO:0007669"/>
    <property type="project" value="UniProtKB-SubCell"/>
</dbReference>
<dbReference type="GO" id="GO:0000981">
    <property type="term" value="F:DNA-binding transcription factor activity, RNA polymerase II-specific"/>
    <property type="evidence" value="ECO:0007669"/>
    <property type="project" value="InterPro"/>
</dbReference>
<dbReference type="GO" id="GO:0000977">
    <property type="term" value="F:RNA polymerase II transcription regulatory region sequence-specific DNA binding"/>
    <property type="evidence" value="ECO:0007669"/>
    <property type="project" value="TreeGrafter"/>
</dbReference>
<dbReference type="GO" id="GO:0008270">
    <property type="term" value="F:zinc ion binding"/>
    <property type="evidence" value="ECO:0007669"/>
    <property type="project" value="InterPro"/>
</dbReference>
<dbReference type="GO" id="GO:0009267">
    <property type="term" value="P:cellular response to starvation"/>
    <property type="evidence" value="ECO:0007669"/>
    <property type="project" value="TreeGrafter"/>
</dbReference>
<dbReference type="GO" id="GO:0006094">
    <property type="term" value="P:gluconeogenesis"/>
    <property type="evidence" value="ECO:0007669"/>
    <property type="project" value="UniProtKB-KW"/>
</dbReference>
<dbReference type="CDD" id="cd00067">
    <property type="entry name" value="GAL4"/>
    <property type="match status" value="1"/>
</dbReference>
<dbReference type="Gene3D" id="4.10.240.10">
    <property type="entry name" value="Zn(2)-C6 fungal-type DNA-binding domain"/>
    <property type="match status" value="1"/>
</dbReference>
<dbReference type="InterPro" id="IPR050335">
    <property type="entry name" value="ERT1_acuK_gluconeogen_tf"/>
</dbReference>
<dbReference type="InterPro" id="IPR056751">
    <property type="entry name" value="PAS_13"/>
</dbReference>
<dbReference type="InterPro" id="IPR036864">
    <property type="entry name" value="Zn2-C6_fun-type_DNA-bd_sf"/>
</dbReference>
<dbReference type="InterPro" id="IPR001138">
    <property type="entry name" value="Zn2Cys6_DnaBD"/>
</dbReference>
<dbReference type="PANTHER" id="PTHR47659:SF1">
    <property type="entry name" value="TRANSCRIPTION ACTIVATOR OF GLUCONEOGENESIS ERT1"/>
    <property type="match status" value="1"/>
</dbReference>
<dbReference type="PANTHER" id="PTHR47659">
    <property type="entry name" value="ZN(II)2CYS6 TRANSCRIPTION FACTOR (EUROFUNG)-RELATED"/>
    <property type="match status" value="1"/>
</dbReference>
<dbReference type="Pfam" id="PF24990">
    <property type="entry name" value="PAS_13"/>
    <property type="match status" value="1"/>
</dbReference>
<dbReference type="SMART" id="SM00066">
    <property type="entry name" value="GAL4"/>
    <property type="match status" value="1"/>
</dbReference>
<dbReference type="SUPFAM" id="SSF57701">
    <property type="entry name" value="Zn2/Cys6 DNA-binding domain"/>
    <property type="match status" value="1"/>
</dbReference>
<dbReference type="PROSITE" id="PS50048">
    <property type="entry name" value="ZN2_CY6_FUNGAL_2"/>
    <property type="match status" value="1"/>
</dbReference>
<gene>
    <name type="primary">acuK</name>
    <name type="ORF">AN7468</name>
</gene>
<comment type="function">
    <text evidence="1">Transcription factor which regulates nonfermentable carbon utilization. Activator of gluconeogenetic genes (By similarity).</text>
</comment>
<comment type="subcellular location">
    <subcellularLocation>
        <location evidence="2">Nucleus</location>
    </subcellularLocation>
</comment>
<comment type="similarity">
    <text evidence="4">Belongs to the ERT1/acuK family.</text>
</comment>
<feature type="chain" id="PRO_0000406442" description="Transcription activator of gluconeogenesis acuK">
    <location>
        <begin position="1"/>
        <end position="683"/>
    </location>
</feature>
<feature type="DNA-binding region" description="Zn(2)-C6 fungal-type" evidence="2">
    <location>
        <begin position="65"/>
        <end position="93"/>
    </location>
</feature>
<feature type="region of interest" description="Disordered" evidence="3">
    <location>
        <begin position="1"/>
        <end position="58"/>
    </location>
</feature>
<feature type="region of interest" description="Disordered" evidence="3">
    <location>
        <begin position="131"/>
        <end position="224"/>
    </location>
</feature>
<feature type="region of interest" description="Disordered" evidence="3">
    <location>
        <begin position="261"/>
        <end position="329"/>
    </location>
</feature>
<feature type="region of interest" description="Disordered" evidence="3">
    <location>
        <begin position="354"/>
        <end position="374"/>
    </location>
</feature>
<feature type="region of interest" description="Disordered" evidence="3">
    <location>
        <begin position="537"/>
        <end position="570"/>
    </location>
</feature>
<feature type="compositionally biased region" description="Polar residues" evidence="3">
    <location>
        <begin position="38"/>
        <end position="51"/>
    </location>
</feature>
<feature type="compositionally biased region" description="Polar residues" evidence="3">
    <location>
        <begin position="131"/>
        <end position="218"/>
    </location>
</feature>
<feature type="compositionally biased region" description="Polar residues" evidence="3">
    <location>
        <begin position="264"/>
        <end position="287"/>
    </location>
</feature>
<feature type="compositionally biased region" description="Polar residues" evidence="3">
    <location>
        <begin position="314"/>
        <end position="325"/>
    </location>
</feature>
<feature type="compositionally biased region" description="Low complexity" evidence="3">
    <location>
        <begin position="354"/>
        <end position="366"/>
    </location>
</feature>
<feature type="compositionally biased region" description="Low complexity" evidence="3">
    <location>
        <begin position="540"/>
        <end position="555"/>
    </location>
</feature>
<keyword id="KW-0010">Activator</keyword>
<keyword id="KW-0238">DNA-binding</keyword>
<keyword id="KW-0312">Gluconeogenesis</keyword>
<keyword id="KW-0479">Metal-binding</keyword>
<keyword id="KW-0539">Nucleus</keyword>
<keyword id="KW-1185">Reference proteome</keyword>
<keyword id="KW-0804">Transcription</keyword>
<keyword id="KW-0805">Transcription regulation</keyword>
<keyword id="KW-0862">Zinc</keyword>
<proteinExistence type="inferred from homology"/>
<name>ACUK_NEOFI</name>